<protein>
    <recommendedName>
        <fullName evidence="1">Isoprenyl transferase</fullName>
        <ecNumber evidence="1">2.5.1.-</ecNumber>
    </recommendedName>
</protein>
<organism>
    <name type="scientific">Streptococcus mutans serotype c (strain ATCC 700610 / UA159)</name>
    <dbReference type="NCBI Taxonomy" id="210007"/>
    <lineage>
        <taxon>Bacteria</taxon>
        <taxon>Bacillati</taxon>
        <taxon>Bacillota</taxon>
        <taxon>Bacilli</taxon>
        <taxon>Lactobacillales</taxon>
        <taxon>Streptococcaceae</taxon>
        <taxon>Streptococcus</taxon>
    </lineage>
</organism>
<accession>Q8DSJ7</accession>
<proteinExistence type="inferred from homology"/>
<keyword id="KW-0460">Magnesium</keyword>
<keyword id="KW-0479">Metal-binding</keyword>
<keyword id="KW-1185">Reference proteome</keyword>
<keyword id="KW-0808">Transferase</keyword>
<dbReference type="EC" id="2.5.1.-" evidence="1"/>
<dbReference type="EMBL" id="AE014133">
    <property type="protein sequence ID" value="AAN59413.1"/>
    <property type="molecule type" value="Genomic_DNA"/>
</dbReference>
<dbReference type="RefSeq" id="NP_722107.1">
    <property type="nucleotide sequence ID" value="NC_004350.2"/>
</dbReference>
<dbReference type="RefSeq" id="WP_002263518.1">
    <property type="nucleotide sequence ID" value="NC_004350.2"/>
</dbReference>
<dbReference type="SMR" id="Q8DSJ7"/>
<dbReference type="STRING" id="210007.SMU_1786"/>
<dbReference type="KEGG" id="smu:SMU_1786"/>
<dbReference type="PATRIC" id="fig|210007.7.peg.1594"/>
<dbReference type="eggNOG" id="COG0020">
    <property type="taxonomic scope" value="Bacteria"/>
</dbReference>
<dbReference type="HOGENOM" id="CLU_038505_1_1_9"/>
<dbReference type="OrthoDB" id="4191603at2"/>
<dbReference type="PhylomeDB" id="Q8DSJ7"/>
<dbReference type="Proteomes" id="UP000002512">
    <property type="component" value="Chromosome"/>
</dbReference>
<dbReference type="GO" id="GO:0005829">
    <property type="term" value="C:cytosol"/>
    <property type="evidence" value="ECO:0007669"/>
    <property type="project" value="TreeGrafter"/>
</dbReference>
<dbReference type="GO" id="GO:0008834">
    <property type="term" value="F:ditrans,polycis-undecaprenyl-diphosphate synthase [(2E,6E)-farnesyl-diphosphate specific] activity"/>
    <property type="evidence" value="ECO:0007669"/>
    <property type="project" value="TreeGrafter"/>
</dbReference>
<dbReference type="GO" id="GO:0000287">
    <property type="term" value="F:magnesium ion binding"/>
    <property type="evidence" value="ECO:0007669"/>
    <property type="project" value="UniProtKB-UniRule"/>
</dbReference>
<dbReference type="GO" id="GO:0030145">
    <property type="term" value="F:manganese ion binding"/>
    <property type="evidence" value="ECO:0007669"/>
    <property type="project" value="TreeGrafter"/>
</dbReference>
<dbReference type="GO" id="GO:0016094">
    <property type="term" value="P:polyprenol biosynthetic process"/>
    <property type="evidence" value="ECO:0007669"/>
    <property type="project" value="TreeGrafter"/>
</dbReference>
<dbReference type="CDD" id="cd00475">
    <property type="entry name" value="Cis_IPPS"/>
    <property type="match status" value="1"/>
</dbReference>
<dbReference type="FunFam" id="3.40.1180.10:FF:000001">
    <property type="entry name" value="(2E,6E)-farnesyl-diphosphate-specific ditrans,polycis-undecaprenyl-diphosphate synthase"/>
    <property type="match status" value="1"/>
</dbReference>
<dbReference type="Gene3D" id="3.40.1180.10">
    <property type="entry name" value="Decaprenyl diphosphate synthase-like"/>
    <property type="match status" value="1"/>
</dbReference>
<dbReference type="HAMAP" id="MF_01139">
    <property type="entry name" value="ISPT"/>
    <property type="match status" value="1"/>
</dbReference>
<dbReference type="InterPro" id="IPR001441">
    <property type="entry name" value="UPP_synth-like"/>
</dbReference>
<dbReference type="InterPro" id="IPR018520">
    <property type="entry name" value="UPP_synth-like_CS"/>
</dbReference>
<dbReference type="InterPro" id="IPR036424">
    <property type="entry name" value="UPP_synth-like_sf"/>
</dbReference>
<dbReference type="NCBIfam" id="NF011405">
    <property type="entry name" value="PRK14830.1"/>
    <property type="match status" value="1"/>
</dbReference>
<dbReference type="NCBIfam" id="TIGR00055">
    <property type="entry name" value="uppS"/>
    <property type="match status" value="1"/>
</dbReference>
<dbReference type="PANTHER" id="PTHR10291:SF0">
    <property type="entry name" value="DEHYDRODOLICHYL DIPHOSPHATE SYNTHASE 2"/>
    <property type="match status" value="1"/>
</dbReference>
<dbReference type="PANTHER" id="PTHR10291">
    <property type="entry name" value="DEHYDRODOLICHYL DIPHOSPHATE SYNTHASE FAMILY MEMBER"/>
    <property type="match status" value="1"/>
</dbReference>
<dbReference type="Pfam" id="PF01255">
    <property type="entry name" value="Prenyltransf"/>
    <property type="match status" value="1"/>
</dbReference>
<dbReference type="SUPFAM" id="SSF64005">
    <property type="entry name" value="Undecaprenyl diphosphate synthase"/>
    <property type="match status" value="1"/>
</dbReference>
<dbReference type="PROSITE" id="PS01066">
    <property type="entry name" value="UPP_SYNTHASE"/>
    <property type="match status" value="1"/>
</dbReference>
<evidence type="ECO:0000255" key="1">
    <source>
        <dbReference type="HAMAP-Rule" id="MF_01139"/>
    </source>
</evidence>
<comment type="function">
    <text evidence="1">Catalyzes the condensation of isopentenyl diphosphate (IPP) with allylic pyrophosphates generating different type of terpenoids.</text>
</comment>
<comment type="cofactor">
    <cofactor evidence="1">
        <name>Mg(2+)</name>
        <dbReference type="ChEBI" id="CHEBI:18420"/>
    </cofactor>
    <text evidence="1">Binds 2 magnesium ions per subunit.</text>
</comment>
<comment type="subunit">
    <text evidence="1">Homodimer.</text>
</comment>
<comment type="similarity">
    <text evidence="1">Belongs to the UPP synthase family.</text>
</comment>
<gene>
    <name evidence="1" type="primary">uppS</name>
    <name type="ordered locus">SMU_1786</name>
</gene>
<sequence>MFTLRRKKQDIKLSKIPAHIGIIMDGNGRWAKKRMKPRVFGHKAGMDALQDVTIAASELGVKILTVYAFSTENWARPQEEVKFIMNLPVEFFDKYVPKLHKNNVRILVIGDKEELPAATLDALERARELTKHNSGLILNFALNYGGRAEIVDAVKLIAQDVLDARFNPGDITEGLIADYLMTSNLPYLYRDPDLIIRTSGELRLSNFLPWQAAYSELYFTDTLWPDFDKKALYLAIEEFNHRHRRFGGV</sequence>
<reference key="1">
    <citation type="journal article" date="2002" name="Proc. Natl. Acad. Sci. U.S.A.">
        <title>Genome sequence of Streptococcus mutans UA159, a cariogenic dental pathogen.</title>
        <authorList>
            <person name="Ajdic D.J."/>
            <person name="McShan W.M."/>
            <person name="McLaughlin R.E."/>
            <person name="Savic G."/>
            <person name="Chang J."/>
            <person name="Carson M.B."/>
            <person name="Primeaux C."/>
            <person name="Tian R."/>
            <person name="Kenton S."/>
            <person name="Jia H.G."/>
            <person name="Lin S.P."/>
            <person name="Qian Y."/>
            <person name="Li S."/>
            <person name="Zhu H."/>
            <person name="Najar F.Z."/>
            <person name="Lai H."/>
            <person name="White J."/>
            <person name="Roe B.A."/>
            <person name="Ferretti J.J."/>
        </authorList>
    </citation>
    <scope>NUCLEOTIDE SEQUENCE [LARGE SCALE GENOMIC DNA]</scope>
    <source>
        <strain>ATCC 700610 / UA159</strain>
    </source>
</reference>
<name>ISPT_STRMU</name>
<feature type="chain" id="PRO_0000123689" description="Isoprenyl transferase">
    <location>
        <begin position="1"/>
        <end position="249"/>
    </location>
</feature>
<feature type="active site" evidence="1">
    <location>
        <position position="25"/>
    </location>
</feature>
<feature type="active site" description="Proton acceptor" evidence="1">
    <location>
        <position position="73"/>
    </location>
</feature>
<feature type="binding site" evidence="1">
    <location>
        <position position="25"/>
    </location>
    <ligand>
        <name>Mg(2+)</name>
        <dbReference type="ChEBI" id="CHEBI:18420"/>
    </ligand>
</feature>
<feature type="binding site" evidence="1">
    <location>
        <begin position="26"/>
        <end position="29"/>
    </location>
    <ligand>
        <name>substrate</name>
    </ligand>
</feature>
<feature type="binding site" evidence="1">
    <location>
        <position position="30"/>
    </location>
    <ligand>
        <name>substrate</name>
    </ligand>
</feature>
<feature type="binding site" evidence="1">
    <location>
        <position position="38"/>
    </location>
    <ligand>
        <name>substrate</name>
    </ligand>
</feature>
<feature type="binding site" evidence="1">
    <location>
        <position position="42"/>
    </location>
    <ligand>
        <name>substrate</name>
    </ligand>
</feature>
<feature type="binding site" evidence="1">
    <location>
        <begin position="70"/>
        <end position="72"/>
    </location>
    <ligand>
        <name>substrate</name>
    </ligand>
</feature>
<feature type="binding site" evidence="1">
    <location>
        <position position="74"/>
    </location>
    <ligand>
        <name>substrate</name>
    </ligand>
</feature>
<feature type="binding site" evidence="1">
    <location>
        <position position="76"/>
    </location>
    <ligand>
        <name>substrate</name>
    </ligand>
</feature>
<feature type="binding site" evidence="1">
    <location>
        <position position="197"/>
    </location>
    <ligand>
        <name>substrate</name>
    </ligand>
</feature>
<feature type="binding site" evidence="1">
    <location>
        <begin position="203"/>
        <end position="205"/>
    </location>
    <ligand>
        <name>substrate</name>
    </ligand>
</feature>
<feature type="binding site" evidence="1">
    <location>
        <position position="216"/>
    </location>
    <ligand>
        <name>Mg(2+)</name>
        <dbReference type="ChEBI" id="CHEBI:18420"/>
    </ligand>
</feature>